<gene>
    <name type="primary">OPG050</name>
    <name type="ORF">F6L</name>
</gene>
<protein>
    <recommendedName>
        <fullName>Protein OPG050</fullName>
    </recommendedName>
    <alternativeName>
        <fullName>Protein F6</fullName>
    </alternativeName>
</protein>
<accession>P68601</accession>
<accession>P21015</accession>
<evidence type="ECO:0000250" key="1">
    <source>
        <dbReference type="UniProtKB" id="P68603"/>
    </source>
</evidence>
<evidence type="ECO:0000305" key="2"/>
<keyword id="KW-0244">Early protein</keyword>
<keyword id="KW-1185">Reference proteome</keyword>
<name>PG050_VACCC</name>
<comment type="induction">
    <text evidence="1">Expressed in the early phase of the viral replicative cycle.</text>
</comment>
<comment type="similarity">
    <text evidence="2">Belongs to the orthopoxvirus OPG050 family.</text>
</comment>
<proteinExistence type="inferred from homology"/>
<feature type="chain" id="PRO_0000099479" description="Protein OPG050">
    <location>
        <begin position="1"/>
        <end position="74"/>
    </location>
</feature>
<organismHost>
    <name type="scientific">Homo sapiens</name>
    <name type="common">Human</name>
    <dbReference type="NCBI Taxonomy" id="9606"/>
</organismHost>
<reference key="1">
    <citation type="journal article" date="1990" name="Virology">
        <title>The complete DNA sequence of vaccinia virus.</title>
        <authorList>
            <person name="Goebel S.J."/>
            <person name="Johnson G.P."/>
            <person name="Perkus M.E."/>
            <person name="Davis S.W."/>
            <person name="Winslow J.P."/>
            <person name="Paoletti E."/>
        </authorList>
    </citation>
    <scope>NUCLEOTIDE SEQUENCE [LARGE SCALE GENOMIC DNA]</scope>
</reference>
<reference key="2">
    <citation type="journal article" date="1990" name="Virology">
        <title>Appendix to 'The complete DNA sequence of vaccinia virus'.</title>
        <authorList>
            <person name="Goebel S.J."/>
            <person name="Johnson G.P."/>
            <person name="Perkus M.E."/>
            <person name="Davis S.W."/>
            <person name="Winslow J.P."/>
            <person name="Paoletti E."/>
        </authorList>
    </citation>
    <scope>NUCLEOTIDE SEQUENCE [LARGE SCALE GENOMIC DNA]</scope>
</reference>
<sequence length="74" mass="8638">MSKILTFVKNKIIDLINNDQIKYSRVIMIEESDSLLPVDEVHANHGFDCVEMIDENISNENIEQYKTESFFTIN</sequence>
<organism>
    <name type="scientific">Vaccinia virus (strain Copenhagen)</name>
    <name type="common">VACV</name>
    <dbReference type="NCBI Taxonomy" id="10249"/>
    <lineage>
        <taxon>Viruses</taxon>
        <taxon>Varidnaviria</taxon>
        <taxon>Bamfordvirae</taxon>
        <taxon>Nucleocytoviricota</taxon>
        <taxon>Pokkesviricetes</taxon>
        <taxon>Chitovirales</taxon>
        <taxon>Poxviridae</taxon>
        <taxon>Chordopoxvirinae</taxon>
        <taxon>Orthopoxvirus</taxon>
        <taxon>Vaccinia virus</taxon>
    </lineage>
</organism>
<dbReference type="EMBL" id="M35027">
    <property type="protein sequence ID" value="AAA48022.1"/>
    <property type="molecule type" value="Genomic_DNA"/>
</dbReference>
<dbReference type="PIR" id="D36213">
    <property type="entry name" value="D36213"/>
</dbReference>
<dbReference type="SMR" id="P68601"/>
<dbReference type="Proteomes" id="UP000008269">
    <property type="component" value="Segment"/>
</dbReference>
<dbReference type="InterPro" id="IPR009521">
    <property type="entry name" value="Orthopox_F6"/>
</dbReference>
<dbReference type="Pfam" id="PF06601">
    <property type="entry name" value="Orthopox_F6"/>
    <property type="match status" value="1"/>
</dbReference>